<reference key="1">
    <citation type="journal article" date="2006" name="Nat. Biotechnol.">
        <title>Complete genome sequence of the entomopathogenic and metabolically versatile soil bacterium Pseudomonas entomophila.</title>
        <authorList>
            <person name="Vodovar N."/>
            <person name="Vallenet D."/>
            <person name="Cruveiller S."/>
            <person name="Rouy Z."/>
            <person name="Barbe V."/>
            <person name="Acosta C."/>
            <person name="Cattolico L."/>
            <person name="Jubin C."/>
            <person name="Lajus A."/>
            <person name="Segurens B."/>
            <person name="Vacherie B."/>
            <person name="Wincker P."/>
            <person name="Weissenbach J."/>
            <person name="Lemaitre B."/>
            <person name="Medigue C."/>
            <person name="Boccard F."/>
        </authorList>
    </citation>
    <scope>NUCLEOTIDE SEQUENCE [LARGE SCALE GENOMIC DNA]</scope>
    <source>
        <strain>L48</strain>
    </source>
</reference>
<keyword id="KW-0687">Ribonucleoprotein</keyword>
<keyword id="KW-0689">Ribosomal protein</keyword>
<protein>
    <recommendedName>
        <fullName evidence="1">Large ribosomal subunit protein uL29</fullName>
    </recommendedName>
    <alternativeName>
        <fullName evidence="2">50S ribosomal protein L29</fullName>
    </alternativeName>
</protein>
<gene>
    <name evidence="1" type="primary">rpmC</name>
    <name type="ordered locus">PSEEN0498</name>
</gene>
<feature type="chain" id="PRO_1000007563" description="Large ribosomal subunit protein uL29">
    <location>
        <begin position="1"/>
        <end position="64"/>
    </location>
</feature>
<comment type="similarity">
    <text evidence="1">Belongs to the universal ribosomal protein uL29 family.</text>
</comment>
<dbReference type="EMBL" id="CT573326">
    <property type="protein sequence ID" value="CAK13444.1"/>
    <property type="molecule type" value="Genomic_DNA"/>
</dbReference>
<dbReference type="SMR" id="Q1IFV8"/>
<dbReference type="STRING" id="384676.PSEEN0498"/>
<dbReference type="KEGG" id="pen:PSEEN0498"/>
<dbReference type="eggNOG" id="COG0255">
    <property type="taxonomic scope" value="Bacteria"/>
</dbReference>
<dbReference type="HOGENOM" id="CLU_158491_1_2_6"/>
<dbReference type="Proteomes" id="UP000000658">
    <property type="component" value="Chromosome"/>
</dbReference>
<dbReference type="GO" id="GO:0022625">
    <property type="term" value="C:cytosolic large ribosomal subunit"/>
    <property type="evidence" value="ECO:0007669"/>
    <property type="project" value="TreeGrafter"/>
</dbReference>
<dbReference type="GO" id="GO:0003735">
    <property type="term" value="F:structural constituent of ribosome"/>
    <property type="evidence" value="ECO:0007669"/>
    <property type="project" value="InterPro"/>
</dbReference>
<dbReference type="GO" id="GO:0006412">
    <property type="term" value="P:translation"/>
    <property type="evidence" value="ECO:0007669"/>
    <property type="project" value="UniProtKB-UniRule"/>
</dbReference>
<dbReference type="CDD" id="cd00427">
    <property type="entry name" value="Ribosomal_L29_HIP"/>
    <property type="match status" value="1"/>
</dbReference>
<dbReference type="FunFam" id="1.10.287.310:FF:000001">
    <property type="entry name" value="50S ribosomal protein L29"/>
    <property type="match status" value="1"/>
</dbReference>
<dbReference type="Gene3D" id="1.10.287.310">
    <property type="match status" value="1"/>
</dbReference>
<dbReference type="HAMAP" id="MF_00374">
    <property type="entry name" value="Ribosomal_uL29"/>
    <property type="match status" value="1"/>
</dbReference>
<dbReference type="InterPro" id="IPR050063">
    <property type="entry name" value="Ribosomal_protein_uL29"/>
</dbReference>
<dbReference type="InterPro" id="IPR001854">
    <property type="entry name" value="Ribosomal_uL29"/>
</dbReference>
<dbReference type="InterPro" id="IPR018254">
    <property type="entry name" value="Ribosomal_uL29_CS"/>
</dbReference>
<dbReference type="InterPro" id="IPR036049">
    <property type="entry name" value="Ribosomal_uL29_sf"/>
</dbReference>
<dbReference type="NCBIfam" id="TIGR00012">
    <property type="entry name" value="L29"/>
    <property type="match status" value="1"/>
</dbReference>
<dbReference type="PANTHER" id="PTHR10916">
    <property type="entry name" value="60S RIBOSOMAL PROTEIN L35/50S RIBOSOMAL PROTEIN L29"/>
    <property type="match status" value="1"/>
</dbReference>
<dbReference type="PANTHER" id="PTHR10916:SF0">
    <property type="entry name" value="LARGE RIBOSOMAL SUBUNIT PROTEIN UL29C"/>
    <property type="match status" value="1"/>
</dbReference>
<dbReference type="Pfam" id="PF00831">
    <property type="entry name" value="Ribosomal_L29"/>
    <property type="match status" value="1"/>
</dbReference>
<dbReference type="SUPFAM" id="SSF46561">
    <property type="entry name" value="Ribosomal protein L29 (L29p)"/>
    <property type="match status" value="1"/>
</dbReference>
<dbReference type="PROSITE" id="PS00579">
    <property type="entry name" value="RIBOSOMAL_L29"/>
    <property type="match status" value="1"/>
</dbReference>
<accession>Q1IFV8</accession>
<evidence type="ECO:0000255" key="1">
    <source>
        <dbReference type="HAMAP-Rule" id="MF_00374"/>
    </source>
</evidence>
<evidence type="ECO:0000305" key="2"/>
<organism>
    <name type="scientific">Pseudomonas entomophila (strain L48)</name>
    <dbReference type="NCBI Taxonomy" id="384676"/>
    <lineage>
        <taxon>Bacteria</taxon>
        <taxon>Pseudomonadati</taxon>
        <taxon>Pseudomonadota</taxon>
        <taxon>Gammaproteobacteria</taxon>
        <taxon>Pseudomonadales</taxon>
        <taxon>Pseudomonadaceae</taxon>
        <taxon>Pseudomonas</taxon>
    </lineage>
</organism>
<proteinExistence type="inferred from homology"/>
<sequence>MMKANELREKSAQQLNEQLLGLLRDQFNLRMQKATGQLGQSHLLSQVKRDIARVKTVLNQQAGK</sequence>
<name>RL29_PSEE4</name>